<dbReference type="EMBL" id="CP000488">
    <property type="protein sequence ID" value="ABL01964.1"/>
    <property type="molecule type" value="Genomic_DNA"/>
</dbReference>
<dbReference type="RefSeq" id="WP_011737590.1">
    <property type="nucleotide sequence ID" value="NC_008610.1"/>
</dbReference>
<dbReference type="SMR" id="A1AVK7"/>
<dbReference type="STRING" id="413404.Rmag_0172"/>
<dbReference type="KEGG" id="rma:Rmag_0172"/>
<dbReference type="eggNOG" id="COG0197">
    <property type="taxonomic scope" value="Bacteria"/>
</dbReference>
<dbReference type="HOGENOM" id="CLU_078858_2_1_6"/>
<dbReference type="OrthoDB" id="9802589at2"/>
<dbReference type="Proteomes" id="UP000002587">
    <property type="component" value="Chromosome"/>
</dbReference>
<dbReference type="GO" id="GO:0022625">
    <property type="term" value="C:cytosolic large ribosomal subunit"/>
    <property type="evidence" value="ECO:0007669"/>
    <property type="project" value="TreeGrafter"/>
</dbReference>
<dbReference type="GO" id="GO:0019843">
    <property type="term" value="F:rRNA binding"/>
    <property type="evidence" value="ECO:0007669"/>
    <property type="project" value="UniProtKB-UniRule"/>
</dbReference>
<dbReference type="GO" id="GO:0003735">
    <property type="term" value="F:structural constituent of ribosome"/>
    <property type="evidence" value="ECO:0007669"/>
    <property type="project" value="InterPro"/>
</dbReference>
<dbReference type="GO" id="GO:0000049">
    <property type="term" value="F:tRNA binding"/>
    <property type="evidence" value="ECO:0007669"/>
    <property type="project" value="UniProtKB-KW"/>
</dbReference>
<dbReference type="GO" id="GO:0006412">
    <property type="term" value="P:translation"/>
    <property type="evidence" value="ECO:0007669"/>
    <property type="project" value="UniProtKB-UniRule"/>
</dbReference>
<dbReference type="CDD" id="cd01433">
    <property type="entry name" value="Ribosomal_L16_L10e"/>
    <property type="match status" value="1"/>
</dbReference>
<dbReference type="FunFam" id="3.90.1170.10:FF:000001">
    <property type="entry name" value="50S ribosomal protein L16"/>
    <property type="match status" value="1"/>
</dbReference>
<dbReference type="Gene3D" id="3.90.1170.10">
    <property type="entry name" value="Ribosomal protein L10e/L16"/>
    <property type="match status" value="1"/>
</dbReference>
<dbReference type="HAMAP" id="MF_01342">
    <property type="entry name" value="Ribosomal_uL16"/>
    <property type="match status" value="1"/>
</dbReference>
<dbReference type="InterPro" id="IPR047873">
    <property type="entry name" value="Ribosomal_uL16"/>
</dbReference>
<dbReference type="InterPro" id="IPR000114">
    <property type="entry name" value="Ribosomal_uL16_bact-type"/>
</dbReference>
<dbReference type="InterPro" id="IPR020798">
    <property type="entry name" value="Ribosomal_uL16_CS"/>
</dbReference>
<dbReference type="InterPro" id="IPR016180">
    <property type="entry name" value="Ribosomal_uL16_dom"/>
</dbReference>
<dbReference type="InterPro" id="IPR036920">
    <property type="entry name" value="Ribosomal_uL16_sf"/>
</dbReference>
<dbReference type="NCBIfam" id="TIGR01164">
    <property type="entry name" value="rplP_bact"/>
    <property type="match status" value="1"/>
</dbReference>
<dbReference type="PANTHER" id="PTHR12220">
    <property type="entry name" value="50S/60S RIBOSOMAL PROTEIN L16"/>
    <property type="match status" value="1"/>
</dbReference>
<dbReference type="PANTHER" id="PTHR12220:SF13">
    <property type="entry name" value="LARGE RIBOSOMAL SUBUNIT PROTEIN UL16M"/>
    <property type="match status" value="1"/>
</dbReference>
<dbReference type="Pfam" id="PF00252">
    <property type="entry name" value="Ribosomal_L16"/>
    <property type="match status" value="1"/>
</dbReference>
<dbReference type="PRINTS" id="PR00060">
    <property type="entry name" value="RIBOSOMALL16"/>
</dbReference>
<dbReference type="SUPFAM" id="SSF54686">
    <property type="entry name" value="Ribosomal protein L16p/L10e"/>
    <property type="match status" value="1"/>
</dbReference>
<dbReference type="PROSITE" id="PS00586">
    <property type="entry name" value="RIBOSOMAL_L16_1"/>
    <property type="match status" value="1"/>
</dbReference>
<dbReference type="PROSITE" id="PS00701">
    <property type="entry name" value="RIBOSOMAL_L16_2"/>
    <property type="match status" value="1"/>
</dbReference>
<organism>
    <name type="scientific">Ruthia magnifica subsp. Calyptogena magnifica</name>
    <dbReference type="NCBI Taxonomy" id="413404"/>
    <lineage>
        <taxon>Bacteria</taxon>
        <taxon>Pseudomonadati</taxon>
        <taxon>Pseudomonadota</taxon>
        <taxon>Gammaproteobacteria</taxon>
        <taxon>Candidatus Pseudothioglobaceae</taxon>
        <taxon>Candidatus Ruthturnera</taxon>
    </lineage>
</organism>
<feature type="chain" id="PRO_1000054696" description="Large ribosomal subunit protein uL16">
    <location>
        <begin position="1"/>
        <end position="136"/>
    </location>
</feature>
<proteinExistence type="inferred from homology"/>
<sequence>MLQPKRTKFRKMMKGRNRGLATGYKVSFGEIGLQAVSRCRMTARQIESARRAMTRHVKRQGKIWIRVFPDKPITKKPLEVRMGKGKGSVEYWVAQIKPGQMLFEMQGVDEIIIREAFALAAAKLPVKTTIIKRTVM</sequence>
<reference key="1">
    <citation type="journal article" date="2007" name="Science">
        <title>The Calyptogena magnifica chemoautotrophic symbiont genome.</title>
        <authorList>
            <person name="Newton I.L.G."/>
            <person name="Woyke T."/>
            <person name="Auchtung T.A."/>
            <person name="Dilly G.F."/>
            <person name="Dutton R.J."/>
            <person name="Fisher M.C."/>
            <person name="Fontanez K.M."/>
            <person name="Lau E."/>
            <person name="Stewart F.J."/>
            <person name="Richardson P.M."/>
            <person name="Barry K.W."/>
            <person name="Saunders E."/>
            <person name="Detter J.C."/>
            <person name="Wu D."/>
            <person name="Eisen J.A."/>
            <person name="Cavanaugh C.M."/>
        </authorList>
    </citation>
    <scope>NUCLEOTIDE SEQUENCE [LARGE SCALE GENOMIC DNA]</scope>
</reference>
<name>RL16_RUTMC</name>
<accession>A1AVK7</accession>
<comment type="function">
    <text evidence="1">Binds 23S rRNA and is also seen to make contacts with the A and possibly P site tRNAs.</text>
</comment>
<comment type="subunit">
    <text evidence="1">Part of the 50S ribosomal subunit.</text>
</comment>
<comment type="similarity">
    <text evidence="1">Belongs to the universal ribosomal protein uL16 family.</text>
</comment>
<evidence type="ECO:0000255" key="1">
    <source>
        <dbReference type="HAMAP-Rule" id="MF_01342"/>
    </source>
</evidence>
<evidence type="ECO:0000305" key="2"/>
<protein>
    <recommendedName>
        <fullName evidence="1">Large ribosomal subunit protein uL16</fullName>
    </recommendedName>
    <alternativeName>
        <fullName evidence="2">50S ribosomal protein L16</fullName>
    </alternativeName>
</protein>
<gene>
    <name evidence="1" type="primary">rplP</name>
    <name type="ordered locus">Rmag_0172</name>
</gene>
<keyword id="KW-0687">Ribonucleoprotein</keyword>
<keyword id="KW-0689">Ribosomal protein</keyword>
<keyword id="KW-0694">RNA-binding</keyword>
<keyword id="KW-0699">rRNA-binding</keyword>
<keyword id="KW-0820">tRNA-binding</keyword>